<dbReference type="EC" id="2.7.1.36" evidence="1"/>
<dbReference type="EMBL" id="CP001463">
    <property type="protein sequence ID" value="ACS90280.1"/>
    <property type="molecule type" value="Genomic_DNA"/>
</dbReference>
<dbReference type="RefSeq" id="WP_015849499.1">
    <property type="nucleotide sequence ID" value="NC_012883.1"/>
</dbReference>
<dbReference type="SMR" id="C6A3T5"/>
<dbReference type="STRING" id="604354.TSIB_1226"/>
<dbReference type="GeneID" id="8096224"/>
<dbReference type="KEGG" id="tsi:TSIB_1226"/>
<dbReference type="eggNOG" id="arCOG01028">
    <property type="taxonomic scope" value="Archaea"/>
</dbReference>
<dbReference type="HOGENOM" id="CLU_017814_0_0_2"/>
<dbReference type="OrthoDB" id="19001at2157"/>
<dbReference type="UniPathway" id="UPA00057">
    <property type="reaction ID" value="UER00098"/>
</dbReference>
<dbReference type="Proteomes" id="UP000009079">
    <property type="component" value="Chromosome"/>
</dbReference>
<dbReference type="GO" id="GO:0005829">
    <property type="term" value="C:cytosol"/>
    <property type="evidence" value="ECO:0007669"/>
    <property type="project" value="TreeGrafter"/>
</dbReference>
<dbReference type="GO" id="GO:0005524">
    <property type="term" value="F:ATP binding"/>
    <property type="evidence" value="ECO:0007669"/>
    <property type="project" value="UniProtKB-UniRule"/>
</dbReference>
<dbReference type="GO" id="GO:0000287">
    <property type="term" value="F:magnesium ion binding"/>
    <property type="evidence" value="ECO:0007669"/>
    <property type="project" value="UniProtKB-UniRule"/>
</dbReference>
<dbReference type="GO" id="GO:0004496">
    <property type="term" value="F:mevalonate kinase activity"/>
    <property type="evidence" value="ECO:0007669"/>
    <property type="project" value="UniProtKB-UniRule"/>
</dbReference>
<dbReference type="GO" id="GO:0019287">
    <property type="term" value="P:isopentenyl diphosphate biosynthetic process, mevalonate pathway"/>
    <property type="evidence" value="ECO:0007669"/>
    <property type="project" value="UniProtKB-UniRule"/>
</dbReference>
<dbReference type="FunFam" id="3.30.230.10:FF:000151">
    <property type="entry name" value="Mevalonate kinase"/>
    <property type="match status" value="1"/>
</dbReference>
<dbReference type="Gene3D" id="3.30.230.10">
    <property type="match status" value="1"/>
</dbReference>
<dbReference type="Gene3D" id="3.30.70.890">
    <property type="entry name" value="GHMP kinase, C-terminal domain"/>
    <property type="match status" value="1"/>
</dbReference>
<dbReference type="HAMAP" id="MF_00217">
    <property type="entry name" value="Mevalonate_kinase"/>
    <property type="match status" value="1"/>
</dbReference>
<dbReference type="InterPro" id="IPR013750">
    <property type="entry name" value="GHMP_kinase_C_dom"/>
</dbReference>
<dbReference type="InterPro" id="IPR036554">
    <property type="entry name" value="GHMP_kinase_C_sf"/>
</dbReference>
<dbReference type="InterPro" id="IPR006204">
    <property type="entry name" value="GHMP_kinase_N_dom"/>
</dbReference>
<dbReference type="InterPro" id="IPR006203">
    <property type="entry name" value="GHMP_knse_ATP-bd_CS"/>
</dbReference>
<dbReference type="InterPro" id="IPR006205">
    <property type="entry name" value="Mev_gal_kin"/>
</dbReference>
<dbReference type="InterPro" id="IPR022937">
    <property type="entry name" value="Mevalonate_kinase_arc"/>
</dbReference>
<dbReference type="InterPro" id="IPR020568">
    <property type="entry name" value="Ribosomal_Su5_D2-typ_SF"/>
</dbReference>
<dbReference type="InterPro" id="IPR014721">
    <property type="entry name" value="Ribsml_uS5_D2-typ_fold_subgr"/>
</dbReference>
<dbReference type="NCBIfam" id="TIGR00549">
    <property type="entry name" value="mevalon_kin"/>
    <property type="match status" value="1"/>
</dbReference>
<dbReference type="NCBIfam" id="NF003036">
    <property type="entry name" value="PRK03926.1"/>
    <property type="match status" value="1"/>
</dbReference>
<dbReference type="PANTHER" id="PTHR43290">
    <property type="entry name" value="MEVALONATE KINASE"/>
    <property type="match status" value="1"/>
</dbReference>
<dbReference type="PANTHER" id="PTHR43290:SF2">
    <property type="entry name" value="MEVALONATE KINASE"/>
    <property type="match status" value="1"/>
</dbReference>
<dbReference type="Pfam" id="PF08544">
    <property type="entry name" value="GHMP_kinases_C"/>
    <property type="match status" value="1"/>
</dbReference>
<dbReference type="Pfam" id="PF00288">
    <property type="entry name" value="GHMP_kinases_N"/>
    <property type="match status" value="1"/>
</dbReference>
<dbReference type="PRINTS" id="PR00959">
    <property type="entry name" value="MEVGALKINASE"/>
</dbReference>
<dbReference type="SUPFAM" id="SSF55060">
    <property type="entry name" value="GHMP Kinase, C-terminal domain"/>
    <property type="match status" value="1"/>
</dbReference>
<dbReference type="SUPFAM" id="SSF54211">
    <property type="entry name" value="Ribosomal protein S5 domain 2-like"/>
    <property type="match status" value="1"/>
</dbReference>
<dbReference type="PROSITE" id="PS00627">
    <property type="entry name" value="GHMP_KINASES_ATP"/>
    <property type="match status" value="1"/>
</dbReference>
<comment type="function">
    <text evidence="1">Catalyzes the phosphorylation of (R)-mevalonate (MVA) to (R)-mevalonate 5-phosphate (MVAP). Functions in the mevalonate (MVA) pathway leading to isopentenyl diphosphate (IPP), a key precursor for the biosynthesis of isoprenoid compounds such as archaeal membrane lipids.</text>
</comment>
<comment type="catalytic activity">
    <reaction evidence="1">
        <text>(R)-mevalonate + ATP = (R)-5-phosphomevalonate + ADP + H(+)</text>
        <dbReference type="Rhea" id="RHEA:17065"/>
        <dbReference type="ChEBI" id="CHEBI:15378"/>
        <dbReference type="ChEBI" id="CHEBI:30616"/>
        <dbReference type="ChEBI" id="CHEBI:36464"/>
        <dbReference type="ChEBI" id="CHEBI:58146"/>
        <dbReference type="ChEBI" id="CHEBI:456216"/>
        <dbReference type="EC" id="2.7.1.36"/>
    </reaction>
</comment>
<comment type="cofactor">
    <cofactor evidence="1">
        <name>Mg(2+)</name>
        <dbReference type="ChEBI" id="CHEBI:18420"/>
    </cofactor>
</comment>
<comment type="pathway">
    <text evidence="1">Isoprenoid biosynthesis; isopentenyl diphosphate biosynthesis via mevalonate pathway; isopentenyl diphosphate from (R)-mevalonate: step 1/3.</text>
</comment>
<comment type="subunit">
    <text evidence="1">Homodimer.</text>
</comment>
<comment type="subcellular location">
    <subcellularLocation>
        <location evidence="1">Cytoplasm</location>
    </subcellularLocation>
</comment>
<comment type="similarity">
    <text evidence="1">Belongs to the GHMP kinase family. Mevalonate kinase subfamily.</text>
</comment>
<gene>
    <name evidence="1" type="primary">mvk</name>
    <name type="ordered locus">TSIB_1226</name>
</gene>
<proteinExistence type="inferred from homology"/>
<sequence>MRVLASAPAKIILFGEHSVVYGKPAIAAAIDLRTYVKAEFNENGRIRIEAKDIRTPGLTVSFSEDQIYFETDYGKAAEVLSYVREAINLVMEEAEKQKGVTVSITSQIPVGAGLGSSAAVAVATIGAVSRLFGLELTPEEVAKLGHKVELLVQGASSGIDPTVSAIGGFLYYQKGSFESLPVVELPIVVGYTGSSGSTKELVAKVRKNYEEMPEIIDPILNSMGRLVEKAREVILAEYDKEIKFKRLGTLMNINHGLLDALGVSTKSLSDLVYASREAGALGAKITGAGGGGCMYALAPEKQSEVATAIKIAGGMPIVTKISREGLRIEDIVQ</sequence>
<accession>C6A3T5</accession>
<evidence type="ECO:0000255" key="1">
    <source>
        <dbReference type="HAMAP-Rule" id="MF_00217"/>
    </source>
</evidence>
<name>MVK_THESM</name>
<protein>
    <recommendedName>
        <fullName evidence="1">Mevalonate kinase</fullName>
        <shortName evidence="1">MK</shortName>
        <shortName evidence="1">MVK</shortName>
        <ecNumber evidence="1">2.7.1.36</ecNumber>
    </recommendedName>
</protein>
<feature type="chain" id="PRO_1000204228" description="Mevalonate kinase">
    <location>
        <begin position="1"/>
        <end position="333"/>
    </location>
</feature>
<feature type="active site" description="Proton acceptor" evidence="1">
    <location>
        <position position="160"/>
    </location>
</feature>
<feature type="binding site" evidence="1">
    <location>
        <begin position="109"/>
        <end position="119"/>
    </location>
    <ligand>
        <name>ATP</name>
        <dbReference type="ChEBI" id="CHEBI:30616"/>
    </ligand>
</feature>
<organism>
    <name type="scientific">Thermococcus sibiricus (strain DSM 12597 / MM 739)</name>
    <dbReference type="NCBI Taxonomy" id="604354"/>
    <lineage>
        <taxon>Archaea</taxon>
        <taxon>Methanobacteriati</taxon>
        <taxon>Methanobacteriota</taxon>
        <taxon>Thermococci</taxon>
        <taxon>Thermococcales</taxon>
        <taxon>Thermococcaceae</taxon>
        <taxon>Thermococcus</taxon>
    </lineage>
</organism>
<reference key="1">
    <citation type="journal article" date="2009" name="Appl. Environ. Microbiol.">
        <title>Metabolic versatility and indigenous origin of the archaeon Thermococcus sibiricus, isolated from a siberian oil reservoir, as revealed by genome analysis.</title>
        <authorList>
            <person name="Mardanov A.V."/>
            <person name="Ravin N.V."/>
            <person name="Svetlitchnyi V.A."/>
            <person name="Beletsky A.V."/>
            <person name="Miroshnichenko M.L."/>
            <person name="Bonch-Osmolovskaya E.A."/>
            <person name="Skryabin K.G."/>
        </authorList>
    </citation>
    <scope>NUCLEOTIDE SEQUENCE [LARGE SCALE GENOMIC DNA]</scope>
    <source>
        <strain>DSM 12597 / MM 739</strain>
    </source>
</reference>
<keyword id="KW-0067">ATP-binding</keyword>
<keyword id="KW-0963">Cytoplasm</keyword>
<keyword id="KW-0414">Isoprene biosynthesis</keyword>
<keyword id="KW-0418">Kinase</keyword>
<keyword id="KW-0444">Lipid biosynthesis</keyword>
<keyword id="KW-0443">Lipid metabolism</keyword>
<keyword id="KW-0460">Magnesium</keyword>
<keyword id="KW-0547">Nucleotide-binding</keyword>
<keyword id="KW-1185">Reference proteome</keyword>
<keyword id="KW-0808">Transferase</keyword>